<name>UFL1_DICDI</name>
<proteinExistence type="inferred from homology"/>
<protein>
    <recommendedName>
        <fullName>E3 UFM1-protein ligase 1 homolog</fullName>
        <ecNumber>2.3.2.-</ecNumber>
    </recommendedName>
</protein>
<gene>
    <name type="ORF">DDB_G0283667</name>
</gene>
<dbReference type="EC" id="2.3.2.-"/>
<dbReference type="EMBL" id="AAFI02000056">
    <property type="protein sequence ID" value="EAL65600.1"/>
    <property type="molecule type" value="Genomic_DNA"/>
</dbReference>
<dbReference type="RefSeq" id="XP_638953.1">
    <property type="nucleotide sequence ID" value="XM_633861.1"/>
</dbReference>
<dbReference type="SMR" id="Q54QS0"/>
<dbReference type="FunCoup" id="Q54QS0">
    <property type="interactions" value="291"/>
</dbReference>
<dbReference type="STRING" id="44689.Q54QS0"/>
<dbReference type="PaxDb" id="44689-DDB0234049"/>
<dbReference type="EnsemblProtists" id="EAL65600">
    <property type="protein sequence ID" value="EAL65600"/>
    <property type="gene ID" value="DDB_G0283667"/>
</dbReference>
<dbReference type="GeneID" id="8624193"/>
<dbReference type="KEGG" id="ddi:DDB_G0283667"/>
<dbReference type="dictyBase" id="DDB_G0283667"/>
<dbReference type="VEuPathDB" id="AmoebaDB:DDB_G0283667"/>
<dbReference type="eggNOG" id="KOG2235">
    <property type="taxonomic scope" value="Eukaryota"/>
</dbReference>
<dbReference type="HOGENOM" id="CLU_012417_1_1_1"/>
<dbReference type="InParanoid" id="Q54QS0"/>
<dbReference type="OMA" id="CILHASG"/>
<dbReference type="PhylomeDB" id="Q54QS0"/>
<dbReference type="Reactome" id="R-DDI-983168">
    <property type="pathway name" value="Antigen processing: Ubiquitination &amp; Proteasome degradation"/>
</dbReference>
<dbReference type="PRO" id="PR:Q54QS0"/>
<dbReference type="Proteomes" id="UP000002195">
    <property type="component" value="Chromosome 4"/>
</dbReference>
<dbReference type="GO" id="GO:0005789">
    <property type="term" value="C:endoplasmic reticulum membrane"/>
    <property type="evidence" value="ECO:0000318"/>
    <property type="project" value="GO_Central"/>
</dbReference>
<dbReference type="GO" id="GO:0061666">
    <property type="term" value="F:UFM1 ligase activity"/>
    <property type="evidence" value="ECO:0007669"/>
    <property type="project" value="InterPro"/>
</dbReference>
<dbReference type="GO" id="GO:0071568">
    <property type="term" value="F:UFM1 transferase activity"/>
    <property type="evidence" value="ECO:0000318"/>
    <property type="project" value="GO_Central"/>
</dbReference>
<dbReference type="GO" id="GO:0071569">
    <property type="term" value="P:protein ufmylation"/>
    <property type="evidence" value="ECO:0007669"/>
    <property type="project" value="InterPro"/>
</dbReference>
<dbReference type="GO" id="GO:0034976">
    <property type="term" value="P:response to endoplasmic reticulum stress"/>
    <property type="evidence" value="ECO:0000318"/>
    <property type="project" value="GO_Central"/>
</dbReference>
<dbReference type="GO" id="GO:0061709">
    <property type="term" value="P:reticulophagy"/>
    <property type="evidence" value="ECO:0000318"/>
    <property type="project" value="GO_Central"/>
</dbReference>
<dbReference type="InterPro" id="IPR018611">
    <property type="entry name" value="Ufl1"/>
</dbReference>
<dbReference type="InterPro" id="IPR056761">
    <property type="entry name" value="Ufl1-like_C"/>
</dbReference>
<dbReference type="InterPro" id="IPR056580">
    <property type="entry name" value="Ufl1_dom"/>
</dbReference>
<dbReference type="InterPro" id="IPR056579">
    <property type="entry name" value="Ufl1_N"/>
</dbReference>
<dbReference type="PANTHER" id="PTHR31057">
    <property type="entry name" value="E3 UFM1-PROTEIN LIGASE 1"/>
    <property type="match status" value="1"/>
</dbReference>
<dbReference type="PANTHER" id="PTHR31057:SF0">
    <property type="entry name" value="E3 UFM1-PROTEIN LIGASE 1"/>
    <property type="match status" value="1"/>
</dbReference>
<dbReference type="Pfam" id="PF09743">
    <property type="entry name" value="E3_UFM1_ligase"/>
    <property type="match status" value="1"/>
</dbReference>
<dbReference type="Pfam" id="PF23659">
    <property type="entry name" value="UFL1"/>
    <property type="match status" value="1"/>
</dbReference>
<dbReference type="Pfam" id="PF25041">
    <property type="entry name" value="UFL1_C"/>
    <property type="match status" value="1"/>
</dbReference>
<reference key="1">
    <citation type="journal article" date="2005" name="Nature">
        <title>The genome of the social amoeba Dictyostelium discoideum.</title>
        <authorList>
            <person name="Eichinger L."/>
            <person name="Pachebat J.A."/>
            <person name="Gloeckner G."/>
            <person name="Rajandream M.A."/>
            <person name="Sucgang R."/>
            <person name="Berriman M."/>
            <person name="Song J."/>
            <person name="Olsen R."/>
            <person name="Szafranski K."/>
            <person name="Xu Q."/>
            <person name="Tunggal B."/>
            <person name="Kummerfeld S."/>
            <person name="Madera M."/>
            <person name="Konfortov B.A."/>
            <person name="Rivero F."/>
            <person name="Bankier A.T."/>
            <person name="Lehmann R."/>
            <person name="Hamlin N."/>
            <person name="Davies R."/>
            <person name="Gaudet P."/>
            <person name="Fey P."/>
            <person name="Pilcher K."/>
            <person name="Chen G."/>
            <person name="Saunders D."/>
            <person name="Sodergren E.J."/>
            <person name="Davis P."/>
            <person name="Kerhornou A."/>
            <person name="Nie X."/>
            <person name="Hall N."/>
            <person name="Anjard C."/>
            <person name="Hemphill L."/>
            <person name="Bason N."/>
            <person name="Farbrother P."/>
            <person name="Desany B."/>
            <person name="Just E."/>
            <person name="Morio T."/>
            <person name="Rost R."/>
            <person name="Churcher C.M."/>
            <person name="Cooper J."/>
            <person name="Haydock S."/>
            <person name="van Driessche N."/>
            <person name="Cronin A."/>
            <person name="Goodhead I."/>
            <person name="Muzny D.M."/>
            <person name="Mourier T."/>
            <person name="Pain A."/>
            <person name="Lu M."/>
            <person name="Harper D."/>
            <person name="Lindsay R."/>
            <person name="Hauser H."/>
            <person name="James K.D."/>
            <person name="Quiles M."/>
            <person name="Madan Babu M."/>
            <person name="Saito T."/>
            <person name="Buchrieser C."/>
            <person name="Wardroper A."/>
            <person name="Felder M."/>
            <person name="Thangavelu M."/>
            <person name="Johnson D."/>
            <person name="Knights A."/>
            <person name="Loulseged H."/>
            <person name="Mungall K.L."/>
            <person name="Oliver K."/>
            <person name="Price C."/>
            <person name="Quail M.A."/>
            <person name="Urushihara H."/>
            <person name="Hernandez J."/>
            <person name="Rabbinowitsch E."/>
            <person name="Steffen D."/>
            <person name="Sanders M."/>
            <person name="Ma J."/>
            <person name="Kohara Y."/>
            <person name="Sharp S."/>
            <person name="Simmonds M.N."/>
            <person name="Spiegler S."/>
            <person name="Tivey A."/>
            <person name="Sugano S."/>
            <person name="White B."/>
            <person name="Walker D."/>
            <person name="Woodward J.R."/>
            <person name="Winckler T."/>
            <person name="Tanaka Y."/>
            <person name="Shaulsky G."/>
            <person name="Schleicher M."/>
            <person name="Weinstock G.M."/>
            <person name="Rosenthal A."/>
            <person name="Cox E.C."/>
            <person name="Chisholm R.L."/>
            <person name="Gibbs R.A."/>
            <person name="Loomis W.F."/>
            <person name="Platzer M."/>
            <person name="Kay R.R."/>
            <person name="Williams J.G."/>
            <person name="Dear P.H."/>
            <person name="Noegel A.A."/>
            <person name="Barrell B.G."/>
            <person name="Kuspa A."/>
        </authorList>
    </citation>
    <scope>NUCLEOTIDE SEQUENCE [LARGE SCALE GENOMIC DNA]</scope>
    <source>
        <strain>AX4</strain>
    </source>
</reference>
<organism>
    <name type="scientific">Dictyostelium discoideum</name>
    <name type="common">Social amoeba</name>
    <dbReference type="NCBI Taxonomy" id="44689"/>
    <lineage>
        <taxon>Eukaryota</taxon>
        <taxon>Amoebozoa</taxon>
        <taxon>Evosea</taxon>
        <taxon>Eumycetozoa</taxon>
        <taxon>Dictyostelia</taxon>
        <taxon>Dictyosteliales</taxon>
        <taxon>Dictyosteliaceae</taxon>
        <taxon>Dictyostelium</taxon>
    </lineage>
</organism>
<feature type="chain" id="PRO_0000328125" description="E3 UFM1-protein ligase 1 homolog">
    <location>
        <begin position="1"/>
        <end position="799"/>
    </location>
</feature>
<feature type="region of interest" description="Disordered" evidence="2">
    <location>
        <begin position="429"/>
        <end position="483"/>
    </location>
</feature>
<feature type="compositionally biased region" description="Basic residues" evidence="2">
    <location>
        <begin position="458"/>
        <end position="468"/>
    </location>
</feature>
<feature type="compositionally biased region" description="Low complexity" evidence="2">
    <location>
        <begin position="469"/>
        <end position="478"/>
    </location>
</feature>
<accession>Q54QS0</accession>
<keyword id="KW-1185">Reference proteome</keyword>
<keyword id="KW-0808">Transferase</keyword>
<keyword id="KW-0833">Ubl conjugation pathway</keyword>
<comment type="function">
    <text evidence="1">E3 UFM1-protein ligase that mediates ufmylation of target proteins.</text>
</comment>
<comment type="similarity">
    <text evidence="3">Belongs to the UFL1 family.</text>
</comment>
<sequence length="799" mass="93288">MEELEILRKKLYSIQRQDNTQKLSERNCIEIIVKMIDLKMIDIIHSLDGKEYITPKQLENEIKDEILKCGGRVVVCDLQSILSIDIIHIEEALEKLKKRDKSIQIYQGEIMTRYYLDSILQEIQEQLQEVGKLHINDLSNRFSIGVDFLINLIEQNLKKFNRSLNNSTNNNNNNNNILLKNIIFDNQEVLYTQSHINRHYHKVIGLFSSITQPILINNVIKQHQNHYQLNERLVRQQLQELIENKRINGFIQGKASNAEFIPTIFSQSRLKWIDSFYHQNQFITFDSVSKLQINEPQSFLKNTFTDGLLLHSCFIHKSLIDKIDDNIIEIIENSNWLDLIPLLPPLTDKDISMIVSNCPNMKTNNAILLGNSFIISKSFVDRCFTLLQKTIQERMEKQQLILENIASSNIKKQQQSKSEIIDQKIETTTTTTTTTQPSKKKDNLINSDDDDNQDNNKKSSKGKNKKSKQQQSSIQKLINDSEDDYKVYNKKQENNNNNKKVDHLKEINQLLSKWYENMEEELVESLSQYLRPLVNQSWESMVKEAKEKLENETQKQRKQQLQQLNSQFFSLYNSFLLFRKGLQSLNDADDDNGKTIIALEKHLLKTVGINITNLLIEINANYHMLDKTTFETPSERSLILSQFPPQLSKSFEKLIQSLNKSTLNDFIDSLENVCSQSQIKLKSLDKKLEKQLLIENQNELEEQFLNEIDVGNQFQIIVNLMYIRYKNNYIFSPPRLIGKLVSTLVMDTSIDKEIITRLTKLHQEIVKLITNNKLSNQDNDNDSTELNDHIKFFKDLILN</sequence>
<evidence type="ECO:0000250" key="1">
    <source>
        <dbReference type="UniProtKB" id="O94874"/>
    </source>
</evidence>
<evidence type="ECO:0000256" key="2">
    <source>
        <dbReference type="SAM" id="MobiDB-lite"/>
    </source>
</evidence>
<evidence type="ECO:0000305" key="3"/>